<reference key="1">
    <citation type="submission" date="2006-11" db="EMBL/GenBank/DDBJ databases">
        <title>Identification and characterization of a new conjugation/ type IVA secretion system (trb/tra) of L. pneumophila Corby localized on a mobile genomic island.</title>
        <authorList>
            <person name="Gloeckner G."/>
            <person name="Albert-Weissenberger C."/>
            <person name="Weinmann E."/>
            <person name="Jacobi S."/>
            <person name="Schunder E."/>
            <person name="Steinert M."/>
            <person name="Buchrieser C."/>
            <person name="Hacker J."/>
            <person name="Heuner K."/>
        </authorList>
    </citation>
    <scope>NUCLEOTIDE SEQUENCE [LARGE SCALE GENOMIC DNA]</scope>
    <source>
        <strain>Corby</strain>
    </source>
</reference>
<name>BIOH_LEGPC</name>
<sequence>MNIHLDKYGQGMPLVLFHGWGFDSQIWQPIIPYLKPKYQIILVDLPGFGLTPMMDWESFKKNLLDQLPDKFALAGWSMGGLYATRLAIEEPARVQYLINITSSPRFISDVDWPGVAEEVFVNFYNNLSKDINKTLKEFISLQLNKMKFDFKIGNPPSPEGLAFGLEILGTWDFREQLKQISIPTVYLFGRLDPITPAKTMAIMEKNYPNFKYVLFNRAAHMPFLSHTDLFITMMDEFIK</sequence>
<proteinExistence type="inferred from homology"/>
<organism>
    <name type="scientific">Legionella pneumophila (strain Corby)</name>
    <dbReference type="NCBI Taxonomy" id="400673"/>
    <lineage>
        <taxon>Bacteria</taxon>
        <taxon>Pseudomonadati</taxon>
        <taxon>Pseudomonadota</taxon>
        <taxon>Gammaproteobacteria</taxon>
        <taxon>Legionellales</taxon>
        <taxon>Legionellaceae</taxon>
        <taxon>Legionella</taxon>
    </lineage>
</organism>
<accession>A5IBW4</accession>
<protein>
    <recommendedName>
        <fullName evidence="1">Pimeloyl-[acyl-carrier protein] methyl ester esterase</fullName>
        <ecNumber evidence="1">3.1.1.85</ecNumber>
    </recommendedName>
    <alternativeName>
        <fullName evidence="1">Biotin synthesis protein BioH</fullName>
    </alternativeName>
    <alternativeName>
        <fullName evidence="1">Carboxylesterase BioH</fullName>
    </alternativeName>
</protein>
<evidence type="ECO:0000255" key="1">
    <source>
        <dbReference type="HAMAP-Rule" id="MF_01260"/>
    </source>
</evidence>
<gene>
    <name evidence="1" type="primary">bioH</name>
    <name type="ordered locus">LPC_0888</name>
</gene>
<dbReference type="EC" id="3.1.1.85" evidence="1"/>
<dbReference type="EMBL" id="CP000675">
    <property type="protein sequence ID" value="ABQ54864.1"/>
    <property type="molecule type" value="Genomic_DNA"/>
</dbReference>
<dbReference type="RefSeq" id="WP_011946475.1">
    <property type="nucleotide sequence ID" value="NZ_JAPMSS010000002.1"/>
</dbReference>
<dbReference type="SMR" id="A5IBW4"/>
<dbReference type="ESTHER" id="legpa-q5x590">
    <property type="family name" value="BioH"/>
</dbReference>
<dbReference type="KEGG" id="lpc:LPC_0888"/>
<dbReference type="HOGENOM" id="CLU_020336_12_2_6"/>
<dbReference type="UniPathway" id="UPA00078"/>
<dbReference type="GO" id="GO:0005737">
    <property type="term" value="C:cytoplasm"/>
    <property type="evidence" value="ECO:0007669"/>
    <property type="project" value="UniProtKB-SubCell"/>
</dbReference>
<dbReference type="GO" id="GO:0016020">
    <property type="term" value="C:membrane"/>
    <property type="evidence" value="ECO:0007669"/>
    <property type="project" value="TreeGrafter"/>
</dbReference>
<dbReference type="GO" id="GO:0090499">
    <property type="term" value="F:pimelyl-[acyl-carrier protein] methyl ester esterase activity"/>
    <property type="evidence" value="ECO:0007669"/>
    <property type="project" value="UniProtKB-EC"/>
</dbReference>
<dbReference type="GO" id="GO:0009102">
    <property type="term" value="P:biotin biosynthetic process"/>
    <property type="evidence" value="ECO:0007669"/>
    <property type="project" value="UniProtKB-UniRule"/>
</dbReference>
<dbReference type="Gene3D" id="3.40.50.1820">
    <property type="entry name" value="alpha/beta hydrolase"/>
    <property type="match status" value="1"/>
</dbReference>
<dbReference type="HAMAP" id="MF_01260">
    <property type="entry name" value="Carboxylester"/>
    <property type="match status" value="1"/>
</dbReference>
<dbReference type="InterPro" id="IPR000073">
    <property type="entry name" value="AB_hydrolase_1"/>
</dbReference>
<dbReference type="InterPro" id="IPR029058">
    <property type="entry name" value="AB_hydrolase_fold"/>
</dbReference>
<dbReference type="InterPro" id="IPR050266">
    <property type="entry name" value="AB_hydrolase_sf"/>
</dbReference>
<dbReference type="InterPro" id="IPR010076">
    <property type="entry name" value="BioH"/>
</dbReference>
<dbReference type="PANTHER" id="PTHR43798:SF31">
    <property type="entry name" value="AB HYDROLASE SUPERFAMILY PROTEIN YCLE"/>
    <property type="match status" value="1"/>
</dbReference>
<dbReference type="PANTHER" id="PTHR43798">
    <property type="entry name" value="MONOACYLGLYCEROL LIPASE"/>
    <property type="match status" value="1"/>
</dbReference>
<dbReference type="Pfam" id="PF00561">
    <property type="entry name" value="Abhydrolase_1"/>
    <property type="match status" value="1"/>
</dbReference>
<dbReference type="SUPFAM" id="SSF53474">
    <property type="entry name" value="alpha/beta-Hydrolases"/>
    <property type="match status" value="1"/>
</dbReference>
<keyword id="KW-0093">Biotin biosynthesis</keyword>
<keyword id="KW-0963">Cytoplasm</keyword>
<keyword id="KW-0378">Hydrolase</keyword>
<keyword id="KW-0719">Serine esterase</keyword>
<feature type="chain" id="PRO_1000067271" description="Pimeloyl-[acyl-carrier protein] methyl ester esterase">
    <location>
        <begin position="1"/>
        <end position="239"/>
    </location>
</feature>
<feature type="active site" description="Nucleophile" evidence="1">
    <location>
        <position position="77"/>
    </location>
</feature>
<feature type="active site" evidence="1">
    <location>
        <position position="192"/>
    </location>
</feature>
<feature type="active site" evidence="1">
    <location>
        <position position="220"/>
    </location>
</feature>
<feature type="binding site" evidence="1">
    <location>
        <position position="20"/>
    </location>
    <ligand>
        <name>substrate</name>
    </ligand>
</feature>
<feature type="binding site" evidence="1">
    <location>
        <begin position="77"/>
        <end position="78"/>
    </location>
    <ligand>
        <name>substrate</name>
    </ligand>
</feature>
<feature type="binding site" evidence="1">
    <location>
        <begin position="138"/>
        <end position="142"/>
    </location>
    <ligand>
        <name>substrate</name>
    </ligand>
</feature>
<feature type="binding site" evidence="1">
    <location>
        <position position="220"/>
    </location>
    <ligand>
        <name>substrate</name>
    </ligand>
</feature>
<comment type="function">
    <text evidence="1">The physiological role of BioH is to remove the methyl group introduced by BioC when the pimeloyl moiety is complete. It allows to synthesize pimeloyl-ACP via the fatty acid synthetic pathway through the hydrolysis of the ester bonds of pimeloyl-ACP esters.</text>
</comment>
<comment type="catalytic activity">
    <reaction evidence="1">
        <text>6-carboxyhexanoyl-[ACP] methyl ester + H2O = 6-carboxyhexanoyl-[ACP] + methanol + H(+)</text>
        <dbReference type="Rhea" id="RHEA:42700"/>
        <dbReference type="Rhea" id="RHEA-COMP:9955"/>
        <dbReference type="Rhea" id="RHEA-COMP:10186"/>
        <dbReference type="ChEBI" id="CHEBI:15377"/>
        <dbReference type="ChEBI" id="CHEBI:15378"/>
        <dbReference type="ChEBI" id="CHEBI:17790"/>
        <dbReference type="ChEBI" id="CHEBI:78846"/>
        <dbReference type="ChEBI" id="CHEBI:82735"/>
        <dbReference type="EC" id="3.1.1.85"/>
    </reaction>
</comment>
<comment type="pathway">
    <text evidence="1">Cofactor biosynthesis; biotin biosynthesis.</text>
</comment>
<comment type="subunit">
    <text evidence="1">Monomer.</text>
</comment>
<comment type="subcellular location">
    <subcellularLocation>
        <location evidence="1">Cytoplasm</location>
    </subcellularLocation>
</comment>
<comment type="similarity">
    <text evidence="1">Belongs to the AB hydrolase superfamily. Carboxylesterase BioH family.</text>
</comment>